<comment type="catalytic activity">
    <reaction>
        <text>[RNA] containing guanosine + H2O = an [RNA fragment]-3'-guanosine-3'-phosphate + a 5'-hydroxy-ribonucleotide-3'-[RNA fragment].</text>
        <dbReference type="EC" id="4.6.1.24"/>
    </reaction>
</comment>
<comment type="similarity">
    <text evidence="2">Belongs to the ribonuclease N1/T1 family.</text>
</comment>
<keyword id="KW-0903">Direct protein sequencing</keyword>
<keyword id="KW-1015">Disulfide bond</keyword>
<keyword id="KW-0255">Endonuclease</keyword>
<keyword id="KW-0378">Hydrolase</keyword>
<keyword id="KW-0456">Lyase</keyword>
<keyword id="KW-0540">Nuclease</keyword>
<reference key="1">
    <citation type="journal article" date="1988" name="Bioorg. Khim.">
        <title>Ribonuclease Fl1 from Fusarium lateriticum. Isolation, substrate specificity and amino acid sequence.</title>
        <authorList>
            <person name="Bezborodova S.I."/>
            <person name="Chepurnova N.K."/>
            <person name="Shlyapnikov S.V."/>
        </authorList>
    </citation>
    <scope>PROTEIN SEQUENCE</scope>
    <source>
        <strain>54228</strain>
    </source>
</reference>
<accession>P16411</accession>
<protein>
    <recommendedName>
        <fullName>Extracellular guanyl-specific ribonuclease Fl1</fullName>
        <shortName>RNase Fl1</shortName>
        <ecNumber>4.6.1.24</ecNumber>
    </recommendedName>
</protein>
<sequence length="105" mass="10889">EASTCGSTPYSASQVRAAANAACQYYQSDDTAGSTTYPHTYNNYEGFDFAVNGPYQEFPIRTGGVYSGGSPGADRVIINTSCQYAGAITHTGASGNNFVGCSNST</sequence>
<name>RNF1_GIBBA</name>
<proteinExistence type="evidence at protein level"/>
<dbReference type="EC" id="4.6.1.24"/>
<dbReference type="SMR" id="P16411"/>
<dbReference type="GO" id="GO:0016829">
    <property type="term" value="F:lyase activity"/>
    <property type="evidence" value="ECO:0007669"/>
    <property type="project" value="UniProtKB-KW"/>
</dbReference>
<dbReference type="GO" id="GO:0046589">
    <property type="term" value="F:ribonuclease T1 activity"/>
    <property type="evidence" value="ECO:0007669"/>
    <property type="project" value="UniProtKB-EC"/>
</dbReference>
<dbReference type="GO" id="GO:0003723">
    <property type="term" value="F:RNA binding"/>
    <property type="evidence" value="ECO:0007669"/>
    <property type="project" value="InterPro"/>
</dbReference>
<dbReference type="GO" id="GO:0004521">
    <property type="term" value="F:RNA endonuclease activity"/>
    <property type="evidence" value="ECO:0007669"/>
    <property type="project" value="InterPro"/>
</dbReference>
<dbReference type="CDD" id="cd00606">
    <property type="entry name" value="fungal_RNase"/>
    <property type="match status" value="1"/>
</dbReference>
<dbReference type="Gene3D" id="3.10.450.30">
    <property type="entry name" value="Microbial ribonucleases"/>
    <property type="match status" value="1"/>
</dbReference>
<dbReference type="InterPro" id="IPR000026">
    <property type="entry name" value="N1-like"/>
</dbReference>
<dbReference type="InterPro" id="IPR016191">
    <property type="entry name" value="Ribonuclease/ribotoxin"/>
</dbReference>
<dbReference type="InterPro" id="IPR051386">
    <property type="entry name" value="Ribonuclease_N1/T1"/>
</dbReference>
<dbReference type="PANTHER" id="PTHR42104">
    <property type="entry name" value="EXTRACELLULAR GUANYL-SPECIFIC RIBONUCLEASE RNTA (AFU_ORTHOLOGUE AFUA_4G03230)"/>
    <property type="match status" value="1"/>
</dbReference>
<dbReference type="PANTHER" id="PTHR42104:SF1">
    <property type="entry name" value="EXTRACELLULAR GUANYL-SPECIFIC RIBONUCLEASE RNTA (AFU_ORTHOLOGUE AFUA_4G03230)"/>
    <property type="match status" value="1"/>
</dbReference>
<dbReference type="Pfam" id="PF00545">
    <property type="entry name" value="Ribonuclease"/>
    <property type="match status" value="1"/>
</dbReference>
<dbReference type="SUPFAM" id="SSF53933">
    <property type="entry name" value="Microbial ribonucleases"/>
    <property type="match status" value="1"/>
</dbReference>
<feature type="chain" id="PRO_0000137377" description="Extracellular guanyl-specific ribonuclease Fl1">
    <location>
        <begin position="1"/>
        <end position="105"/>
    </location>
</feature>
<feature type="active site" evidence="1">
    <location>
        <position position="39"/>
    </location>
</feature>
<feature type="active site" description="Proton acceptor" evidence="1">
    <location>
        <position position="57"/>
    </location>
</feature>
<feature type="active site" description="Proton donor" evidence="1">
    <location>
        <position position="90"/>
    </location>
</feature>
<feature type="disulfide bond" evidence="1">
    <location>
        <begin position="5"/>
        <end position="101"/>
    </location>
</feature>
<feature type="disulfide bond" evidence="1">
    <location>
        <begin position="23"/>
        <end position="82"/>
    </location>
</feature>
<organism>
    <name type="scientific">Gibberella baccata</name>
    <name type="common">Fusarium lateritium</name>
    <dbReference type="NCBI Taxonomy" id="5523"/>
    <lineage>
        <taxon>Eukaryota</taxon>
        <taxon>Fungi</taxon>
        <taxon>Dikarya</taxon>
        <taxon>Ascomycota</taxon>
        <taxon>Pezizomycotina</taxon>
        <taxon>Sordariomycetes</taxon>
        <taxon>Hypocreomycetidae</taxon>
        <taxon>Hypocreales</taxon>
        <taxon>Nectriaceae</taxon>
        <taxon>Fusarium</taxon>
        <taxon>Fusarium lateritium species complex</taxon>
    </lineage>
</organism>
<evidence type="ECO:0000250" key="1"/>
<evidence type="ECO:0000305" key="2"/>